<keyword id="KW-0106">Calcium</keyword>
<keyword id="KW-1003">Cell membrane</keyword>
<keyword id="KW-0963">Cytoplasm</keyword>
<keyword id="KW-0221">Differentiation</keyword>
<keyword id="KW-0344">Guanine-nucleotide releasing factor</keyword>
<keyword id="KW-0446">Lipid-binding</keyword>
<keyword id="KW-0472">Membrane</keyword>
<keyword id="KW-0479">Metal-binding</keyword>
<keyword id="KW-1185">Reference proteome</keyword>
<keyword id="KW-0862">Zinc</keyword>
<keyword id="KW-0863">Zinc-finger</keyword>
<accession>Q1LZ97</accession>
<accession>Q58D14</accession>
<name>GRP4_BOVIN</name>
<reference key="1">
    <citation type="journal article" date="2005" name="BMC Genomics">
        <title>Characterization of 954 bovine full-CDS cDNA sequences.</title>
        <authorList>
            <person name="Harhay G.P."/>
            <person name="Sonstegard T.S."/>
            <person name="Keele J.W."/>
            <person name="Heaton M.P."/>
            <person name="Clawson M.L."/>
            <person name="Snelling W.M."/>
            <person name="Wiedmann R.T."/>
            <person name="Van Tassell C.P."/>
            <person name="Smith T.P.L."/>
        </authorList>
    </citation>
    <scope>NUCLEOTIDE SEQUENCE [LARGE SCALE MRNA]</scope>
</reference>
<reference key="2">
    <citation type="submission" date="2006-05" db="EMBL/GenBank/DDBJ databases">
        <authorList>
            <consortium name="NIH - Mammalian Gene Collection (MGC) project"/>
        </authorList>
    </citation>
    <scope>NUCLEOTIDE SEQUENCE [LARGE SCALE MRNA]</scope>
    <source>
        <strain>Hereford</strain>
        <tissue>Ascending colon</tissue>
    </source>
</reference>
<protein>
    <recommendedName>
        <fullName>RAS guanyl-releasing protein 4</fullName>
    </recommendedName>
</protein>
<gene>
    <name type="primary">RASGRP4</name>
</gene>
<organism>
    <name type="scientific">Bos taurus</name>
    <name type="common">Bovine</name>
    <dbReference type="NCBI Taxonomy" id="9913"/>
    <lineage>
        <taxon>Eukaryota</taxon>
        <taxon>Metazoa</taxon>
        <taxon>Chordata</taxon>
        <taxon>Craniata</taxon>
        <taxon>Vertebrata</taxon>
        <taxon>Euteleostomi</taxon>
        <taxon>Mammalia</taxon>
        <taxon>Eutheria</taxon>
        <taxon>Laurasiatheria</taxon>
        <taxon>Artiodactyla</taxon>
        <taxon>Ruminantia</taxon>
        <taxon>Pecora</taxon>
        <taxon>Bovidae</taxon>
        <taxon>Bovinae</taxon>
        <taxon>Bos</taxon>
    </lineage>
</organism>
<evidence type="ECO:0000250" key="1"/>
<evidence type="ECO:0000250" key="2">
    <source>
        <dbReference type="UniProtKB" id="Q8BTM9"/>
    </source>
</evidence>
<evidence type="ECO:0000250" key="3">
    <source>
        <dbReference type="UniProtKB" id="Q8TDF6"/>
    </source>
</evidence>
<evidence type="ECO:0000255" key="4">
    <source>
        <dbReference type="PROSITE-ProRule" id="PRU00135"/>
    </source>
</evidence>
<evidence type="ECO:0000255" key="5">
    <source>
        <dbReference type="PROSITE-ProRule" id="PRU00168"/>
    </source>
</evidence>
<evidence type="ECO:0000255" key="6">
    <source>
        <dbReference type="PROSITE-ProRule" id="PRU00226"/>
    </source>
</evidence>
<evidence type="ECO:0000255" key="7">
    <source>
        <dbReference type="PROSITE-ProRule" id="PRU00448"/>
    </source>
</evidence>
<evidence type="ECO:0000256" key="8">
    <source>
        <dbReference type="SAM" id="MobiDB-lite"/>
    </source>
</evidence>
<evidence type="ECO:0000305" key="9"/>
<proteinExistence type="evidence at transcript level"/>
<comment type="function">
    <text evidence="2">Functions as a cation- and diacylglycerol (DAG)-regulated nucleotide exchange factor activating Ras through the exchange of bound GDP for GTP (By similarity). In neutrophils, participates in a phospholipase C-activating N-formyl peptide-activated GPCR (G protein-coupled receptor) signaling pathway by promoting Ras-mediated activation of PIK3CG/PI3Kgamma to promote neutrophil functional responses (By similarity). In CD117(+) dendritic cells and mast cells, participates in an lipopolysaccharide (LPS)-activated signaling pathway that stimulates the production of interferon-gamma and other pro-inflammatory cytokines by natural killer (NK) cells (By similarity). May function in mast cell differentiation (By similarity). Does not appear to be required for the development of B-cells, DC-cells, T-cells, or NK-cells (By similarity).</text>
</comment>
<comment type="subcellular location">
    <subcellularLocation>
        <location evidence="3">Cytoplasm</location>
    </subcellularLocation>
    <subcellularLocation>
        <location evidence="3">Cell membrane</location>
    </subcellularLocation>
    <text evidence="2">Recruited to membranes upon activation by DAG.</text>
</comment>
<comment type="domain">
    <text evidence="1">The phorbol-ester/DAG-type zinc finger mediates the binding and the functional activation by DAG.</text>
</comment>
<comment type="similarity">
    <text evidence="9">Belongs to the RASGRP family.</text>
</comment>
<comment type="sequence caution" evidence="9">
    <conflict type="frameshift">
        <sequence resource="EMBL-CDS" id="AAX46630"/>
    </conflict>
</comment>
<feature type="chain" id="PRO_0000315212" description="RAS guanyl-releasing protein 4">
    <location>
        <begin position="1"/>
        <end position="673"/>
    </location>
</feature>
<feature type="domain" description="N-terminal Ras-GEF" evidence="4">
    <location>
        <begin position="49"/>
        <end position="172"/>
    </location>
</feature>
<feature type="domain" description="Ras-GEF" evidence="5">
    <location>
        <begin position="201"/>
        <end position="432"/>
    </location>
</feature>
<feature type="domain" description="EF-hand" evidence="7">
    <location>
        <begin position="466"/>
        <end position="501"/>
    </location>
</feature>
<feature type="zinc finger region" description="Phorbol-ester/DAG-type" evidence="6">
    <location>
        <begin position="540"/>
        <end position="590"/>
    </location>
</feature>
<feature type="region of interest" description="Disordered" evidence="8">
    <location>
        <begin position="1"/>
        <end position="34"/>
    </location>
</feature>
<feature type="region of interest" description="Disordered" evidence="8">
    <location>
        <begin position="162"/>
        <end position="188"/>
    </location>
</feature>
<feature type="region of interest" description="Disordered" evidence="8">
    <location>
        <begin position="593"/>
        <end position="618"/>
    </location>
</feature>
<feature type="region of interest" description="Disordered" evidence="8">
    <location>
        <begin position="638"/>
        <end position="673"/>
    </location>
</feature>
<feature type="compositionally biased region" description="Basic residues" evidence="8">
    <location>
        <begin position="1"/>
        <end position="10"/>
    </location>
</feature>
<feature type="compositionally biased region" description="Basic residues" evidence="8">
    <location>
        <begin position="20"/>
        <end position="32"/>
    </location>
</feature>
<feature type="compositionally biased region" description="Pro residues" evidence="8">
    <location>
        <begin position="603"/>
        <end position="612"/>
    </location>
</feature>
<dbReference type="EMBL" id="BT021783">
    <property type="protein sequence ID" value="AAX46630.1"/>
    <property type="status" value="ALT_FRAME"/>
    <property type="molecule type" value="mRNA"/>
</dbReference>
<dbReference type="EMBL" id="BC116130">
    <property type="protein sequence ID" value="AAI16131.1"/>
    <property type="molecule type" value="mRNA"/>
</dbReference>
<dbReference type="RefSeq" id="NP_001030456.2">
    <property type="nucleotide sequence ID" value="NM_001035379.2"/>
</dbReference>
<dbReference type="SMR" id="Q1LZ97"/>
<dbReference type="FunCoup" id="Q1LZ97">
    <property type="interactions" value="474"/>
</dbReference>
<dbReference type="STRING" id="9913.ENSBTAP00000042303"/>
<dbReference type="PaxDb" id="9913-ENSBTAP00000042303"/>
<dbReference type="GeneID" id="529375"/>
<dbReference type="KEGG" id="bta:529375"/>
<dbReference type="CTD" id="115727"/>
<dbReference type="eggNOG" id="KOG3417">
    <property type="taxonomic scope" value="Eukaryota"/>
</dbReference>
<dbReference type="HOGENOM" id="CLU_019261_2_1_1"/>
<dbReference type="InParanoid" id="Q1LZ97"/>
<dbReference type="OrthoDB" id="74314at2759"/>
<dbReference type="TreeFam" id="TF312918"/>
<dbReference type="Proteomes" id="UP000009136">
    <property type="component" value="Unplaced"/>
</dbReference>
<dbReference type="GO" id="GO:0009898">
    <property type="term" value="C:cytoplasmic side of plasma membrane"/>
    <property type="evidence" value="ECO:0000250"/>
    <property type="project" value="UniProtKB"/>
</dbReference>
<dbReference type="GO" id="GO:0005829">
    <property type="term" value="C:cytosol"/>
    <property type="evidence" value="ECO:0000250"/>
    <property type="project" value="UniProtKB"/>
</dbReference>
<dbReference type="GO" id="GO:0005886">
    <property type="term" value="C:plasma membrane"/>
    <property type="evidence" value="ECO:0000318"/>
    <property type="project" value="GO_Central"/>
</dbReference>
<dbReference type="GO" id="GO:0005509">
    <property type="term" value="F:calcium ion binding"/>
    <property type="evidence" value="ECO:0007669"/>
    <property type="project" value="InterPro"/>
</dbReference>
<dbReference type="GO" id="GO:0019992">
    <property type="term" value="F:diacylglycerol binding"/>
    <property type="evidence" value="ECO:0000250"/>
    <property type="project" value="UniProtKB"/>
</dbReference>
<dbReference type="GO" id="GO:0005085">
    <property type="term" value="F:guanyl-nucleotide exchange factor activity"/>
    <property type="evidence" value="ECO:0000250"/>
    <property type="project" value="UniProtKB"/>
</dbReference>
<dbReference type="GO" id="GO:0008270">
    <property type="term" value="F:zinc ion binding"/>
    <property type="evidence" value="ECO:0007669"/>
    <property type="project" value="UniProtKB-KW"/>
</dbReference>
<dbReference type="GO" id="GO:0140367">
    <property type="term" value="P:antibacterial innate immune response"/>
    <property type="evidence" value="ECO:0000250"/>
    <property type="project" value="UniProtKB"/>
</dbReference>
<dbReference type="GO" id="GO:0030154">
    <property type="term" value="P:cell differentiation"/>
    <property type="evidence" value="ECO:0007669"/>
    <property type="project" value="UniProtKB-KW"/>
</dbReference>
<dbReference type="GO" id="GO:0007200">
    <property type="term" value="P:phospholipase C-activating G protein-coupled receptor signaling pathway"/>
    <property type="evidence" value="ECO:0000250"/>
    <property type="project" value="UniProtKB"/>
</dbReference>
<dbReference type="GO" id="GO:0002717">
    <property type="term" value="P:positive regulation of natural killer cell mediated immunity"/>
    <property type="evidence" value="ECO:0000250"/>
    <property type="project" value="UniProtKB"/>
</dbReference>
<dbReference type="GO" id="GO:0007265">
    <property type="term" value="P:Ras protein signal transduction"/>
    <property type="evidence" value="ECO:0000318"/>
    <property type="project" value="GO_Central"/>
</dbReference>
<dbReference type="CDD" id="cd20863">
    <property type="entry name" value="C1_RASGRP4"/>
    <property type="match status" value="1"/>
</dbReference>
<dbReference type="CDD" id="cd00155">
    <property type="entry name" value="RasGEF"/>
    <property type="match status" value="1"/>
</dbReference>
<dbReference type="CDD" id="cd06224">
    <property type="entry name" value="REM"/>
    <property type="match status" value="1"/>
</dbReference>
<dbReference type="FunFam" id="1.10.238.10:FF:000114">
    <property type="entry name" value="RAS guanyl releasing protein 4"/>
    <property type="match status" value="1"/>
</dbReference>
<dbReference type="FunFam" id="1.20.870.10:FF:000009">
    <property type="entry name" value="RAS guanyl releasing protein 4"/>
    <property type="match status" value="1"/>
</dbReference>
<dbReference type="FunFam" id="3.30.60.20:FF:000037">
    <property type="entry name" value="RAS guanyl releasing protein 4"/>
    <property type="match status" value="1"/>
</dbReference>
<dbReference type="FunFam" id="1.10.840.10:FF:000003">
    <property type="entry name" value="Ras guanyl-releasing protein 3 isoform 1"/>
    <property type="match status" value="1"/>
</dbReference>
<dbReference type="Gene3D" id="3.30.60.20">
    <property type="match status" value="1"/>
</dbReference>
<dbReference type="Gene3D" id="1.10.238.10">
    <property type="entry name" value="EF-hand"/>
    <property type="match status" value="1"/>
</dbReference>
<dbReference type="Gene3D" id="1.10.840.10">
    <property type="entry name" value="Ras guanine-nucleotide exchange factors catalytic domain"/>
    <property type="match status" value="1"/>
</dbReference>
<dbReference type="Gene3D" id="1.20.870.10">
    <property type="entry name" value="Son of sevenless (SoS) protein Chain: S domain 1"/>
    <property type="match status" value="1"/>
</dbReference>
<dbReference type="InterPro" id="IPR046349">
    <property type="entry name" value="C1-like_sf"/>
</dbReference>
<dbReference type="InterPro" id="IPR020454">
    <property type="entry name" value="DAG/PE-bd"/>
</dbReference>
<dbReference type="InterPro" id="IPR002048">
    <property type="entry name" value="EF_hand_dom"/>
</dbReference>
<dbReference type="InterPro" id="IPR002219">
    <property type="entry name" value="PE/DAG-bd"/>
</dbReference>
<dbReference type="InterPro" id="IPR008937">
    <property type="entry name" value="Ras-like_GEF"/>
</dbReference>
<dbReference type="InterPro" id="IPR000651">
    <property type="entry name" value="Ras-like_Gua-exchang_fac_N"/>
</dbReference>
<dbReference type="InterPro" id="IPR023578">
    <property type="entry name" value="Ras_GEF_dom_sf"/>
</dbReference>
<dbReference type="InterPro" id="IPR001895">
    <property type="entry name" value="RASGEF_cat_dom"/>
</dbReference>
<dbReference type="InterPro" id="IPR036964">
    <property type="entry name" value="RASGEF_cat_dom_sf"/>
</dbReference>
<dbReference type="PANTHER" id="PTHR23113">
    <property type="entry name" value="GUANINE NUCLEOTIDE EXCHANGE FACTOR"/>
    <property type="match status" value="1"/>
</dbReference>
<dbReference type="PANTHER" id="PTHR23113:SF157">
    <property type="entry name" value="RAS GUANYL-RELEASING PROTEIN 4"/>
    <property type="match status" value="1"/>
</dbReference>
<dbReference type="Pfam" id="PF00130">
    <property type="entry name" value="C1_1"/>
    <property type="match status" value="1"/>
</dbReference>
<dbReference type="Pfam" id="PF00617">
    <property type="entry name" value="RasGEF"/>
    <property type="match status" value="1"/>
</dbReference>
<dbReference type="PRINTS" id="PR00008">
    <property type="entry name" value="DAGPEDOMAIN"/>
</dbReference>
<dbReference type="SMART" id="SM00109">
    <property type="entry name" value="C1"/>
    <property type="match status" value="1"/>
</dbReference>
<dbReference type="SMART" id="SM00147">
    <property type="entry name" value="RasGEF"/>
    <property type="match status" value="1"/>
</dbReference>
<dbReference type="SUPFAM" id="SSF57889">
    <property type="entry name" value="Cysteine-rich domain"/>
    <property type="match status" value="1"/>
</dbReference>
<dbReference type="SUPFAM" id="SSF48366">
    <property type="entry name" value="Ras GEF"/>
    <property type="match status" value="1"/>
</dbReference>
<dbReference type="PROSITE" id="PS50222">
    <property type="entry name" value="EF_HAND_2"/>
    <property type="match status" value="1"/>
</dbReference>
<dbReference type="PROSITE" id="PS50009">
    <property type="entry name" value="RASGEF_CAT"/>
    <property type="match status" value="1"/>
</dbReference>
<dbReference type="PROSITE" id="PS50212">
    <property type="entry name" value="RASGEF_NTER"/>
    <property type="match status" value="1"/>
</dbReference>
<dbReference type="PROSITE" id="PS00479">
    <property type="entry name" value="ZF_DAG_PE_1"/>
    <property type="match status" value="1"/>
</dbReference>
<dbReference type="PROSITE" id="PS50081">
    <property type="entry name" value="ZF_DAG_PE_2"/>
    <property type="match status" value="1"/>
</dbReference>
<sequence length="673" mass="74824">MNRKDSKRKSHQECPVKTGGRGRPRQARRHKTCPSPREISKVMASMALGMLNEGGCSEDELLEKCIQSFDSAGSLRRGDHVLNMVLAMHSWVLPSAHFAARLLTLYQEATGSTQELRRLQICHLVRYWLTQHPETMHQDPQLEEVIGRFWATVEQEGNSVQQSLGDFSSRLSPGGPGPPHPMSSPGLGKKRKVSLLFDHLETGELAEHLTYLEFRSFQAITPQDLRDYVLQGSVRGCPTLEGSVGLSNSVSRWVQVMVLSRPGPAQRAQVLDKFIQVAQKLLQLHNFNTLMAVTGGLCHSAISRLKDSHAHLSPDSTKALLELTELLAAHNNYARYRRTWAGCMDFRLPVLGVHLKDLVALNEAQPDRLPDGRLHLPKLNSLYLRLQELAALQQQHPPGNASEDLLHLLTLSLDLFYTEDEIYELSYAREPRCPKSLPPSPFKAPLVVEWAPGVTPKPDTVTLGRHVEQLVESVFKNYDPDGRGTISQEDFERLSGNFPFACHGLHPPPCQGSGSFSREELTGYLLRASAICSKLGLAFLHTFQEVTFRKPTFCNSCSGFLWGVTKQGYRCRDCGLCCHRHCRDQVKVECKKRPGAKGDASPPEAPVPPTPVPQASCGSEDNLSYTLSLEPETGCHVRHAWTQTESPHPSWEPETVPLPAKASPPTESSKLNS</sequence>